<accession>P35820</accession>
<accession>Q9V6I9</accession>
<organism>
    <name type="scientific">Drosophila melanogaster</name>
    <name type="common">Fruit fly</name>
    <dbReference type="NCBI Taxonomy" id="7227"/>
    <lineage>
        <taxon>Eukaryota</taxon>
        <taxon>Metazoa</taxon>
        <taxon>Ecdysozoa</taxon>
        <taxon>Arthropoda</taxon>
        <taxon>Hexapoda</taxon>
        <taxon>Insecta</taxon>
        <taxon>Pterygota</taxon>
        <taxon>Neoptera</taxon>
        <taxon>Endopterygota</taxon>
        <taxon>Diptera</taxon>
        <taxon>Brachycera</taxon>
        <taxon>Muscomorpha</taxon>
        <taxon>Ephydroidea</taxon>
        <taxon>Drosophilidae</taxon>
        <taxon>Drosophila</taxon>
        <taxon>Sophophora</taxon>
    </lineage>
</organism>
<name>PSC_DROME</name>
<protein>
    <recommendedName>
        <fullName>Polycomb group protein Psc</fullName>
    </recommendedName>
    <alternativeName>
        <fullName>Protein posterior sex combs</fullName>
    </alternativeName>
</protein>
<reference key="1">
    <citation type="journal article" date="1991" name="Nature">
        <title>Drosophila genes Posterior Sex Combs and Suppressor two of zeste encode proteins with homology to the murine bmi-1 oncogene.</title>
        <authorList>
            <person name="Brunk B.P."/>
            <person name="Martin E.C."/>
            <person name="Sharp E."/>
            <person name="Adler P.N."/>
        </authorList>
    </citation>
    <scope>NUCLEOTIDE SEQUENCE [MRNA]</scope>
    <scope>FUNCTION</scope>
</reference>
<reference key="2">
    <citation type="journal article" date="2005" name="Mol. Cell. Biol.">
        <title>Analysis of a polycomb group protein defines regions that link repressive activity on nucleosomal templates to in vivo function.</title>
        <authorList>
            <person name="King I.F.G."/>
            <person name="Emmons R.B."/>
            <person name="Francis N.J."/>
            <person name="Wild B."/>
            <person name="Mueller J."/>
            <person name="Kingston R.E."/>
            <person name="Wu C.-T."/>
        </authorList>
    </citation>
    <scope>NUCLEOTIDE SEQUENCE [MRNA]</scope>
    <source>
        <strain>Psce25</strain>
    </source>
</reference>
<reference key="3">
    <citation type="journal article" date="2000" name="Science">
        <title>The genome sequence of Drosophila melanogaster.</title>
        <authorList>
            <person name="Adams M.D."/>
            <person name="Celniker S.E."/>
            <person name="Holt R.A."/>
            <person name="Evans C.A."/>
            <person name="Gocayne J.D."/>
            <person name="Amanatides P.G."/>
            <person name="Scherer S.E."/>
            <person name="Li P.W."/>
            <person name="Hoskins R.A."/>
            <person name="Galle R.F."/>
            <person name="George R.A."/>
            <person name="Lewis S.E."/>
            <person name="Richards S."/>
            <person name="Ashburner M."/>
            <person name="Henderson S.N."/>
            <person name="Sutton G.G."/>
            <person name="Wortman J.R."/>
            <person name="Yandell M.D."/>
            <person name="Zhang Q."/>
            <person name="Chen L.X."/>
            <person name="Brandon R.C."/>
            <person name="Rogers Y.-H.C."/>
            <person name="Blazej R.G."/>
            <person name="Champe M."/>
            <person name="Pfeiffer B.D."/>
            <person name="Wan K.H."/>
            <person name="Doyle C."/>
            <person name="Baxter E.G."/>
            <person name="Helt G."/>
            <person name="Nelson C.R."/>
            <person name="Miklos G.L.G."/>
            <person name="Abril J.F."/>
            <person name="Agbayani A."/>
            <person name="An H.-J."/>
            <person name="Andrews-Pfannkoch C."/>
            <person name="Baldwin D."/>
            <person name="Ballew R.M."/>
            <person name="Basu A."/>
            <person name="Baxendale J."/>
            <person name="Bayraktaroglu L."/>
            <person name="Beasley E.M."/>
            <person name="Beeson K.Y."/>
            <person name="Benos P.V."/>
            <person name="Berman B.P."/>
            <person name="Bhandari D."/>
            <person name="Bolshakov S."/>
            <person name="Borkova D."/>
            <person name="Botchan M.R."/>
            <person name="Bouck J."/>
            <person name="Brokstein P."/>
            <person name="Brottier P."/>
            <person name="Burtis K.C."/>
            <person name="Busam D.A."/>
            <person name="Butler H."/>
            <person name="Cadieu E."/>
            <person name="Center A."/>
            <person name="Chandra I."/>
            <person name="Cherry J.M."/>
            <person name="Cawley S."/>
            <person name="Dahlke C."/>
            <person name="Davenport L.B."/>
            <person name="Davies P."/>
            <person name="de Pablos B."/>
            <person name="Delcher A."/>
            <person name="Deng Z."/>
            <person name="Mays A.D."/>
            <person name="Dew I."/>
            <person name="Dietz S.M."/>
            <person name="Dodson K."/>
            <person name="Doup L.E."/>
            <person name="Downes M."/>
            <person name="Dugan-Rocha S."/>
            <person name="Dunkov B.C."/>
            <person name="Dunn P."/>
            <person name="Durbin K.J."/>
            <person name="Evangelista C.C."/>
            <person name="Ferraz C."/>
            <person name="Ferriera S."/>
            <person name="Fleischmann W."/>
            <person name="Fosler C."/>
            <person name="Gabrielian A.E."/>
            <person name="Garg N.S."/>
            <person name="Gelbart W.M."/>
            <person name="Glasser K."/>
            <person name="Glodek A."/>
            <person name="Gong F."/>
            <person name="Gorrell J.H."/>
            <person name="Gu Z."/>
            <person name="Guan P."/>
            <person name="Harris M."/>
            <person name="Harris N.L."/>
            <person name="Harvey D.A."/>
            <person name="Heiman T.J."/>
            <person name="Hernandez J.R."/>
            <person name="Houck J."/>
            <person name="Hostin D."/>
            <person name="Houston K.A."/>
            <person name="Howland T.J."/>
            <person name="Wei M.-H."/>
            <person name="Ibegwam C."/>
            <person name="Jalali M."/>
            <person name="Kalush F."/>
            <person name="Karpen G.H."/>
            <person name="Ke Z."/>
            <person name="Kennison J.A."/>
            <person name="Ketchum K.A."/>
            <person name="Kimmel B.E."/>
            <person name="Kodira C.D."/>
            <person name="Kraft C.L."/>
            <person name="Kravitz S."/>
            <person name="Kulp D."/>
            <person name="Lai Z."/>
            <person name="Lasko P."/>
            <person name="Lei Y."/>
            <person name="Levitsky A.A."/>
            <person name="Li J.H."/>
            <person name="Li Z."/>
            <person name="Liang Y."/>
            <person name="Lin X."/>
            <person name="Liu X."/>
            <person name="Mattei B."/>
            <person name="McIntosh T.C."/>
            <person name="McLeod M.P."/>
            <person name="McPherson D."/>
            <person name="Merkulov G."/>
            <person name="Milshina N.V."/>
            <person name="Mobarry C."/>
            <person name="Morris J."/>
            <person name="Moshrefi A."/>
            <person name="Mount S.M."/>
            <person name="Moy M."/>
            <person name="Murphy B."/>
            <person name="Murphy L."/>
            <person name="Muzny D.M."/>
            <person name="Nelson D.L."/>
            <person name="Nelson D.R."/>
            <person name="Nelson K.A."/>
            <person name="Nixon K."/>
            <person name="Nusskern D.R."/>
            <person name="Pacleb J.M."/>
            <person name="Palazzolo M."/>
            <person name="Pittman G.S."/>
            <person name="Pan S."/>
            <person name="Pollard J."/>
            <person name="Puri V."/>
            <person name="Reese M.G."/>
            <person name="Reinert K."/>
            <person name="Remington K."/>
            <person name="Saunders R.D.C."/>
            <person name="Scheeler F."/>
            <person name="Shen H."/>
            <person name="Shue B.C."/>
            <person name="Siden-Kiamos I."/>
            <person name="Simpson M."/>
            <person name="Skupski M.P."/>
            <person name="Smith T.J."/>
            <person name="Spier E."/>
            <person name="Spradling A.C."/>
            <person name="Stapleton M."/>
            <person name="Strong R."/>
            <person name="Sun E."/>
            <person name="Svirskas R."/>
            <person name="Tector C."/>
            <person name="Turner R."/>
            <person name="Venter E."/>
            <person name="Wang A.H."/>
            <person name="Wang X."/>
            <person name="Wang Z.-Y."/>
            <person name="Wassarman D.A."/>
            <person name="Weinstock G.M."/>
            <person name="Weissenbach J."/>
            <person name="Williams S.M."/>
            <person name="Woodage T."/>
            <person name="Worley K.C."/>
            <person name="Wu D."/>
            <person name="Yang S."/>
            <person name="Yao Q.A."/>
            <person name="Ye J."/>
            <person name="Yeh R.-F."/>
            <person name="Zaveri J.S."/>
            <person name="Zhan M."/>
            <person name="Zhang G."/>
            <person name="Zhao Q."/>
            <person name="Zheng L."/>
            <person name="Zheng X.H."/>
            <person name="Zhong F.N."/>
            <person name="Zhong W."/>
            <person name="Zhou X."/>
            <person name="Zhu S.C."/>
            <person name="Zhu X."/>
            <person name="Smith H.O."/>
            <person name="Gibbs R.A."/>
            <person name="Myers E.W."/>
            <person name="Rubin G.M."/>
            <person name="Venter J.C."/>
        </authorList>
    </citation>
    <scope>NUCLEOTIDE SEQUENCE [LARGE SCALE GENOMIC DNA]</scope>
    <source>
        <strain>Berkeley</strain>
    </source>
</reference>
<reference key="4">
    <citation type="journal article" date="2002" name="Genome Biol.">
        <title>Annotation of the Drosophila melanogaster euchromatic genome: a systematic review.</title>
        <authorList>
            <person name="Misra S."/>
            <person name="Crosby M.A."/>
            <person name="Mungall C.J."/>
            <person name="Matthews B.B."/>
            <person name="Campbell K.S."/>
            <person name="Hradecky P."/>
            <person name="Huang Y."/>
            <person name="Kaminker J.S."/>
            <person name="Millburn G.H."/>
            <person name="Prochnik S.E."/>
            <person name="Smith C.D."/>
            <person name="Tupy J.L."/>
            <person name="Whitfield E.J."/>
            <person name="Bayraktaroglu L."/>
            <person name="Berman B.P."/>
            <person name="Bettencourt B.R."/>
            <person name="Celniker S.E."/>
            <person name="de Grey A.D.N.J."/>
            <person name="Drysdale R.A."/>
            <person name="Harris N.L."/>
            <person name="Richter J."/>
            <person name="Russo S."/>
            <person name="Schroeder A.J."/>
            <person name="Shu S.Q."/>
            <person name="Stapleton M."/>
            <person name="Yamada C."/>
            <person name="Ashburner M."/>
            <person name="Gelbart W.M."/>
            <person name="Rubin G.M."/>
            <person name="Lewis S.E."/>
        </authorList>
    </citation>
    <scope>GENOME REANNOTATION</scope>
    <source>
        <strain>Berkeley</strain>
    </source>
</reference>
<reference key="5">
    <citation type="journal article" date="2001" name="Nature">
        <title>A Drosophila Polycomb group complex includes Zeste and dTAFII proteins.</title>
        <authorList>
            <person name="Saurin A.J."/>
            <person name="Shao Z."/>
            <person name="Erdjument-Bromage H."/>
            <person name="Tempst P."/>
            <person name="Kingston R.E."/>
        </authorList>
    </citation>
    <scope>IDENTIFICATION IN THE PRC1 COMPLEX WITH SCE; PC AND PH</scope>
</reference>
<reference key="6">
    <citation type="journal article" date="2001" name="Mol. Cell">
        <title>Reconstitution of a functional core polycomb repressive complex.</title>
        <authorList>
            <person name="Francis N.J."/>
            <person name="Saurin A.J."/>
            <person name="Shao Z."/>
            <person name="Kingston R.E."/>
        </authorList>
    </citation>
    <scope>IDENTIFICATION IN A PCG COMPLEX WITH SCE; PC AND PH</scope>
</reference>
<reference key="7">
    <citation type="journal article" date="2008" name="J. Proteome Res.">
        <title>Phosphoproteome analysis of Drosophila melanogaster embryos.</title>
        <authorList>
            <person name="Zhai B."/>
            <person name="Villen J."/>
            <person name="Beausoleil S.A."/>
            <person name="Mintseris J."/>
            <person name="Gygi S.P."/>
        </authorList>
    </citation>
    <scope>PHOSPHORYLATION [LARGE SCALE ANALYSIS] AT SER-656; SER-658; SER-1139; THR-1222; THR-1236; THR-1251; SER-1253; SER-1266 AND SER-1274</scope>
    <scope>IDENTIFICATION BY MASS SPECTROMETRY</scope>
    <source>
        <tissue>Embryo</tissue>
    </source>
</reference>
<evidence type="ECO:0000255" key="1">
    <source>
        <dbReference type="PROSITE-ProRule" id="PRU00175"/>
    </source>
</evidence>
<evidence type="ECO:0000256" key="2">
    <source>
        <dbReference type="SAM" id="MobiDB-lite"/>
    </source>
</evidence>
<evidence type="ECO:0000269" key="3">
    <source>
    </source>
</evidence>
<evidence type="ECO:0000269" key="4">
    <source>
    </source>
</evidence>
<evidence type="ECO:0000269" key="5">
    <source>
    </source>
</evidence>
<evidence type="ECO:0000269" key="6">
    <source>
    </source>
</evidence>
<evidence type="ECO:0000305" key="7"/>
<sequence length="1601" mass="169833">MMTPESKAIQPAAATTKQTAEATATTTMAHTQQKSQLSTLAKTTTTTATNKAAKSVVSNANSSGNNSSKKLALSQSQKTTTTTTPPTTTTTTTAAAAAEATTNADKMQKQQQLKQQLFAACSIKVKSENTLATTANAALAAATTTTTTATPALATGKAAKTILENGIKKESTPPAVESVEASSSSSSSSSSSSSSSSSWPTTRRATSEDASSNGGASADEEKSEEDPTAAVAASSTATTTSDLATTSRPRPVLLTAVNPHIICHLCQGYLINATTIVECLHSFCHSCLINHLRKERFCPRCEMVINNAKPNIKSDTTLQAIVYKLVPGLYERELMRKRAFYKDRPEEAALATPEQRGDDTEHLIFSPSDDMSLSLEYAELGELKTDSEPELVDTLRPRYLQCPAMCRVSHLKKFVYDKFEIDAQRFSIDIMYKVKTIVLLDYYTLMDIAYIYTWKRDAPMRFYYRVYESPQPLVKPAPRRVLPLKLEKQERENQEQQLAVEVASSKVEPVSLPEDQKAEASIKVEEQESTREIVKEVIKDVAATPPTETLKLVINRNMLDKREKSHSPQMSSKSSSKSSPCTPVSSPSEPNIKLKIDLSKQNSVTIIDMSDPERREIVKPLKPEKESRSKKKDKDGSPKSSSSSSSSSSGERKRKSPSPLTVPPLTIRTERIMSPSGVSTLSPRVTSGAFSEDPKSEFLKSFALKPIKVKVESPERTLNNRAITPPSPSVQQSASPKSKGNNLDDSILMKPPSCMPPKSIASSKRKSKEPVKAVSKKQKLSPPLPTVDFKIRLPVTNGNSSGTASPKIEKPLMPPPAKPPMLAPRKLQPSAQFAPPPSPIHHHAGVQMSAPGNRTPIAKRYQPILPKASRPNPFANIPNDVNRLLKDAGTEIKSIGGGSVENNSNAAQKPHLYGPKGESKMGPPALPATTPSQGNKNVGKQAGNLPMSAPPNKGNSSNNYLNLALFNSSKCKGKEAPPGCRTPMYTPNSPIYSPSSPQYVPSYNIPTMPTYKYTPKPTPNSGSGNGGSGSYLQNMLGGGNGGSLGGLFPSPPTKSDQNTNPAQGGGGSSSATQSGGNNGIVNNNIYMPNEDAPEKQQVKVKSLLNSCNINIPSSLSITISRDNGDSSSPNNGQHPKHKSPVNNYIEIVKLPDQPQDQVQAAKEAQKRQSPPAAVPGHLAAKLPPPPPSKAIPSPQHLVSRMTPPQLPKVATPPPPSSPRVITPPKTSPPANAAKVTPLKPVLTPTQVDKKTPSPEKRTAAQMGSHSPTASENKSPKGGPAGVANSTGGAQNGDPAAKKFRPILPRQNGMPELAPKLPTLAPFVGFNPLQNPAAGKKVPPSKKSPNAGAAAHQSGQQKLVNGGQSQPAQQKTSPPAQKNQQQVKKVSKNPTPPPPSLPAVGKMMPHPVMHSQNAPLSIASSASAAAVASGQLDLSNFLKENLRRVHAAQAAQAAQVAAAANQSNMMYNLAQMGHMTPAMYNYQQAYFREQLSRMQRVGNEVFNDYLQKLKTAAATGGGGPVEGELKPMLPTVTLPSPGATPPAASPKTSPLPAGKLTAAATAPQTKGNSSSGAANARQQTAATGNNGATVPAASLPPATKSK</sequence>
<proteinExistence type="evidence at protein level"/>
<dbReference type="EMBL" id="X59275">
    <property type="protein sequence ID" value="CAA41965.1"/>
    <property type="molecule type" value="mRNA"/>
</dbReference>
<dbReference type="EMBL" id="DQ022542">
    <property type="protein sequence ID" value="AAZ20646.1"/>
    <property type="molecule type" value="mRNA"/>
</dbReference>
<dbReference type="EMBL" id="AE013599">
    <property type="protein sequence ID" value="AAF58434.1"/>
    <property type="molecule type" value="Genomic_DNA"/>
</dbReference>
<dbReference type="PIR" id="S17983">
    <property type="entry name" value="S17983"/>
</dbReference>
<dbReference type="RefSeq" id="NP_001286368.1">
    <property type="nucleotide sequence ID" value="NM_001299439.1"/>
</dbReference>
<dbReference type="RefSeq" id="NP_001286369.1">
    <property type="nucleotide sequence ID" value="NM_001299440.1"/>
</dbReference>
<dbReference type="RefSeq" id="NP_523725.2">
    <property type="nucleotide sequence ID" value="NM_079001.3"/>
</dbReference>
<dbReference type="SMR" id="P35820"/>
<dbReference type="BioGRID" id="62201">
    <property type="interactions" value="42"/>
</dbReference>
<dbReference type="ComplexPortal" id="CPX-2427">
    <property type="entry name" value="dRING-associated factors complex"/>
</dbReference>
<dbReference type="ComplexPortal" id="CPX-2578">
    <property type="entry name" value="Polycomb repressive complex 1, Psc variant"/>
</dbReference>
<dbReference type="FunCoup" id="P35820">
    <property type="interactions" value="349"/>
</dbReference>
<dbReference type="IntAct" id="P35820">
    <property type="interactions" value="11"/>
</dbReference>
<dbReference type="STRING" id="7227.FBpp0311526"/>
<dbReference type="GlyGen" id="P35820">
    <property type="glycosylation" value="3 sites"/>
</dbReference>
<dbReference type="iPTMnet" id="P35820"/>
<dbReference type="PaxDb" id="7227-FBpp0086911"/>
<dbReference type="DNASU" id="36431"/>
<dbReference type="EnsemblMetazoa" id="FBtr0087798">
    <property type="protein sequence ID" value="FBpp0086911"/>
    <property type="gene ID" value="FBgn0005624"/>
</dbReference>
<dbReference type="EnsemblMetazoa" id="FBtr0345196">
    <property type="protein sequence ID" value="FBpp0311395"/>
    <property type="gene ID" value="FBgn0005624"/>
</dbReference>
<dbReference type="EnsemblMetazoa" id="FBtr0345375">
    <property type="protein sequence ID" value="FBpp0311526"/>
    <property type="gene ID" value="FBgn0005624"/>
</dbReference>
<dbReference type="GeneID" id="36431"/>
<dbReference type="KEGG" id="dme:Dmel_CG3886"/>
<dbReference type="AGR" id="FB:FBgn0005624"/>
<dbReference type="CTD" id="100653366"/>
<dbReference type="FlyBase" id="FBgn0005624">
    <property type="gene designation" value="Psc"/>
</dbReference>
<dbReference type="VEuPathDB" id="VectorBase:FBgn0005624"/>
<dbReference type="eggNOG" id="KOG2660">
    <property type="taxonomic scope" value="Eukaryota"/>
</dbReference>
<dbReference type="GeneTree" id="ENSGT00940000173039"/>
<dbReference type="HOGENOM" id="CLU_257256_0_0_1"/>
<dbReference type="InParanoid" id="P35820"/>
<dbReference type="OMA" id="NFAQMGH"/>
<dbReference type="OrthoDB" id="10264655at2759"/>
<dbReference type="PhylomeDB" id="P35820"/>
<dbReference type="Reactome" id="R-DME-2559580">
    <property type="pathway name" value="Oxidative Stress Induced Senescence"/>
</dbReference>
<dbReference type="Reactome" id="R-DME-3108214">
    <property type="pathway name" value="SUMOylation of DNA damage response and repair proteins"/>
</dbReference>
<dbReference type="Reactome" id="R-DME-3899300">
    <property type="pathway name" value="SUMOylation of transcription cofactors"/>
</dbReference>
<dbReference type="Reactome" id="R-DME-4570464">
    <property type="pathway name" value="SUMOylation of RNA binding proteins"/>
</dbReference>
<dbReference type="Reactome" id="R-DME-8939243">
    <property type="pathway name" value="RUNX1 interacts with co-factors whose precise effect on RUNX1 targets is not known"/>
</dbReference>
<dbReference type="Reactome" id="R-DME-8943724">
    <property type="pathway name" value="Regulation of PTEN gene transcription"/>
</dbReference>
<dbReference type="Reactome" id="R-DME-8953750">
    <property type="pathway name" value="Transcriptional Regulation by E2F6"/>
</dbReference>
<dbReference type="SignaLink" id="P35820"/>
<dbReference type="BioGRID-ORCS" id="36431">
    <property type="hits" value="0 hits in 3 CRISPR screens"/>
</dbReference>
<dbReference type="CD-CODE" id="58FDC23F">
    <property type="entry name" value="PcG body"/>
</dbReference>
<dbReference type="ChiTaRS" id="Psc">
    <property type="organism name" value="fly"/>
</dbReference>
<dbReference type="GenomeRNAi" id="36431"/>
<dbReference type="PRO" id="PR:P35820"/>
<dbReference type="Proteomes" id="UP000000803">
    <property type="component" value="Chromosome 2R"/>
</dbReference>
<dbReference type="Bgee" id="FBgn0005624">
    <property type="expression patterns" value="Expressed in polar follicle cell (Drosophila) in ovary and 226 other cell types or tissues"/>
</dbReference>
<dbReference type="ExpressionAtlas" id="P35820">
    <property type="expression patterns" value="baseline and differential"/>
</dbReference>
<dbReference type="GO" id="GO:0005634">
    <property type="term" value="C:nucleus"/>
    <property type="evidence" value="ECO:0000314"/>
    <property type="project" value="FlyBase"/>
</dbReference>
<dbReference type="GO" id="GO:0031519">
    <property type="term" value="C:PcG protein complex"/>
    <property type="evidence" value="ECO:0000314"/>
    <property type="project" value="FlyBase"/>
</dbReference>
<dbReference type="GO" id="GO:0035102">
    <property type="term" value="C:PRC1 complex"/>
    <property type="evidence" value="ECO:0000314"/>
    <property type="project" value="FlyBase"/>
</dbReference>
<dbReference type="GO" id="GO:0003682">
    <property type="term" value="F:chromatin binding"/>
    <property type="evidence" value="ECO:0000314"/>
    <property type="project" value="FlyBase"/>
</dbReference>
<dbReference type="GO" id="GO:0003677">
    <property type="term" value="F:DNA binding"/>
    <property type="evidence" value="ECO:0000314"/>
    <property type="project" value="FlyBase"/>
</dbReference>
<dbReference type="GO" id="GO:1990841">
    <property type="term" value="F:promoter-specific chromatin binding"/>
    <property type="evidence" value="ECO:0000318"/>
    <property type="project" value="GO_Central"/>
</dbReference>
<dbReference type="GO" id="GO:0043565">
    <property type="term" value="F:sequence-specific DNA binding"/>
    <property type="evidence" value="ECO:0000314"/>
    <property type="project" value="FlyBase"/>
</dbReference>
<dbReference type="GO" id="GO:0008270">
    <property type="term" value="F:zinc ion binding"/>
    <property type="evidence" value="ECO:0000255"/>
    <property type="project" value="FlyBase"/>
</dbReference>
<dbReference type="GO" id="GO:0009948">
    <property type="term" value="P:anterior/posterior axis specification"/>
    <property type="evidence" value="ECO:0000315"/>
    <property type="project" value="UniProtKB"/>
</dbReference>
<dbReference type="GO" id="GO:0006338">
    <property type="term" value="P:chromatin remodeling"/>
    <property type="evidence" value="ECO:0000314"/>
    <property type="project" value="FlyBase"/>
</dbReference>
<dbReference type="GO" id="GO:0031507">
    <property type="term" value="P:heterochromatin formation"/>
    <property type="evidence" value="ECO:0000314"/>
    <property type="project" value="FlyBase"/>
</dbReference>
<dbReference type="GO" id="GO:0010629">
    <property type="term" value="P:negative regulation of gene expression"/>
    <property type="evidence" value="ECO:0000315"/>
    <property type="project" value="FlyBase"/>
</dbReference>
<dbReference type="GO" id="GO:0000122">
    <property type="term" value="P:negative regulation of transcription by RNA polymerase II"/>
    <property type="evidence" value="ECO:0000318"/>
    <property type="project" value="GO_Central"/>
</dbReference>
<dbReference type="GO" id="GO:0006357">
    <property type="term" value="P:regulation of transcription by RNA polymerase II"/>
    <property type="evidence" value="ECO:0000315"/>
    <property type="project" value="UniProtKB"/>
</dbReference>
<dbReference type="GO" id="GO:0035186">
    <property type="term" value="P:syncytial blastoderm mitotic cell cycle"/>
    <property type="evidence" value="ECO:0000315"/>
    <property type="project" value="FlyBase"/>
</dbReference>
<dbReference type="GO" id="GO:0007419">
    <property type="term" value="P:ventral cord development"/>
    <property type="evidence" value="ECO:0007001"/>
    <property type="project" value="FlyBase"/>
</dbReference>
<dbReference type="CDD" id="cd17082">
    <property type="entry name" value="RAWUL_PCGF2_like"/>
    <property type="match status" value="1"/>
</dbReference>
<dbReference type="FunFam" id="3.10.20.90:FF:000318">
    <property type="entry name" value="polycomb group protein Psc"/>
    <property type="match status" value="1"/>
</dbReference>
<dbReference type="FunFam" id="3.30.40.10:FF:000033">
    <property type="entry name" value="Polycomb group RING finger protein 3"/>
    <property type="match status" value="1"/>
</dbReference>
<dbReference type="Gene3D" id="3.10.20.90">
    <property type="entry name" value="Phosphatidylinositol 3-kinase Catalytic Subunit, Chain A, domain 1"/>
    <property type="match status" value="1"/>
</dbReference>
<dbReference type="Gene3D" id="3.30.40.10">
    <property type="entry name" value="Zinc/RING finger domain, C3HC4 (zinc finger)"/>
    <property type="match status" value="1"/>
</dbReference>
<dbReference type="InterPro" id="IPR032443">
    <property type="entry name" value="RAWUL"/>
</dbReference>
<dbReference type="InterPro" id="IPR018957">
    <property type="entry name" value="Znf_C3HC4_RING-type"/>
</dbReference>
<dbReference type="InterPro" id="IPR001841">
    <property type="entry name" value="Znf_RING"/>
</dbReference>
<dbReference type="InterPro" id="IPR013083">
    <property type="entry name" value="Znf_RING/FYVE/PHD"/>
</dbReference>
<dbReference type="InterPro" id="IPR017907">
    <property type="entry name" value="Znf_RING_CS"/>
</dbReference>
<dbReference type="PANTHER" id="PTHR10825:SF29">
    <property type="entry name" value="POLYCOMB GROUP RING FINGER PROTEIN 1"/>
    <property type="match status" value="1"/>
</dbReference>
<dbReference type="PANTHER" id="PTHR10825">
    <property type="entry name" value="RING FINGER DOMAIN-CONTAINING, POLYCOMB GROUP COMPONENT"/>
    <property type="match status" value="1"/>
</dbReference>
<dbReference type="Pfam" id="PF16207">
    <property type="entry name" value="RAWUL"/>
    <property type="match status" value="1"/>
</dbReference>
<dbReference type="Pfam" id="PF00097">
    <property type="entry name" value="zf-C3HC4"/>
    <property type="match status" value="1"/>
</dbReference>
<dbReference type="SUPFAM" id="SSF57850">
    <property type="entry name" value="RING/U-box"/>
    <property type="match status" value="1"/>
</dbReference>
<dbReference type="PROSITE" id="PS00518">
    <property type="entry name" value="ZF_RING_1"/>
    <property type="match status" value="1"/>
</dbReference>
<dbReference type="PROSITE" id="PS50089">
    <property type="entry name" value="ZF_RING_2"/>
    <property type="match status" value="1"/>
</dbReference>
<comment type="function">
    <text evidence="6">Polycomb group (PcG) protein. PcG proteins act by forming multiprotein complexes, which are required to maintain the transcriptionally repressive state of homeotic genes throughout development. PcG proteins are not required to initiate repression, but to maintain it during later stages of development. Component of the PcG multiprotein PRC1 complex, a complex that acts via chromatin remodeling and modification of histones; it mediates monoubiquitination of histone H2A 'Lys-118', rendering chromatin heritably changed in its expressibility. Needed to maintain expression patterns of the homeotic selector genes of the Antennapedia (Antp-C) and Bithorax (BX-C) complexes, and hence for the maintenance of segmental determination.</text>
</comment>
<comment type="subunit">
    <text evidence="3 4">Component of PRC1 complex, which contains many PcG proteins like Pc, ph, Scm, Psc, Sce and also chromatin-remodeling proteins such as histone deacetylases. This complex is distinct from the Esc/E(z) complex, at least composed of esc, E(z), Su(z)12, HDAC1/Rpd3 and Caf1-55. The 2 complexes however cooperate and interact together during the first 3 hours of development to establish PcG silencing.</text>
</comment>
<comment type="subcellular location">
    <subcellularLocation>
        <location evidence="7">Nucleus</location>
    </subcellularLocation>
</comment>
<gene>
    <name type="primary">Psc</name>
    <name type="ORF">CG3886</name>
</gene>
<keyword id="KW-0217">Developmental protein</keyword>
<keyword id="KW-0238">DNA-binding</keyword>
<keyword id="KW-0479">Metal-binding</keyword>
<keyword id="KW-0539">Nucleus</keyword>
<keyword id="KW-0597">Phosphoprotein</keyword>
<keyword id="KW-1185">Reference proteome</keyword>
<keyword id="KW-0862">Zinc</keyword>
<keyword id="KW-0863">Zinc-finger</keyword>
<feature type="chain" id="PRO_0000056388" description="Polycomb group protein Psc">
    <location>
        <begin position="1"/>
        <end position="1601"/>
    </location>
</feature>
<feature type="zinc finger region" description="RING-type" evidence="1">
    <location>
        <begin position="263"/>
        <end position="302"/>
    </location>
</feature>
<feature type="region of interest" description="Disordered" evidence="2">
    <location>
        <begin position="1"/>
        <end position="91"/>
    </location>
</feature>
<feature type="region of interest" description="Disordered" evidence="2">
    <location>
        <begin position="165"/>
        <end position="245"/>
    </location>
</feature>
<feature type="region of interest" description="Disordered" evidence="2">
    <location>
        <begin position="561"/>
        <end position="693"/>
    </location>
</feature>
<feature type="region of interest" description="Disordered" evidence="2">
    <location>
        <begin position="711"/>
        <end position="856"/>
    </location>
</feature>
<feature type="region of interest" description="Disordered" evidence="2">
    <location>
        <begin position="895"/>
        <end position="960"/>
    </location>
</feature>
<feature type="region of interest" description="Disordered" evidence="2">
    <location>
        <begin position="1011"/>
        <end position="1097"/>
    </location>
</feature>
<feature type="region of interest" description="Disordered" evidence="2">
    <location>
        <begin position="1116"/>
        <end position="1315"/>
    </location>
</feature>
<feature type="region of interest" description="Disordered" evidence="2">
    <location>
        <begin position="1330"/>
        <end position="1408"/>
    </location>
</feature>
<feature type="region of interest" description="Disordered" evidence="2">
    <location>
        <begin position="1512"/>
        <end position="1601"/>
    </location>
</feature>
<feature type="compositionally biased region" description="Low complexity" evidence="2">
    <location>
        <begin position="8"/>
        <end position="91"/>
    </location>
</feature>
<feature type="compositionally biased region" description="Low complexity" evidence="2">
    <location>
        <begin position="182"/>
        <end position="198"/>
    </location>
</feature>
<feature type="compositionally biased region" description="Polar residues" evidence="2">
    <location>
        <begin position="199"/>
        <end position="215"/>
    </location>
</feature>
<feature type="compositionally biased region" description="Low complexity" evidence="2">
    <location>
        <begin position="228"/>
        <end position="245"/>
    </location>
</feature>
<feature type="compositionally biased region" description="Low complexity" evidence="2">
    <location>
        <begin position="567"/>
        <end position="590"/>
    </location>
</feature>
<feature type="compositionally biased region" description="Basic and acidic residues" evidence="2">
    <location>
        <begin position="611"/>
        <end position="637"/>
    </location>
</feature>
<feature type="compositionally biased region" description="Low complexity" evidence="2">
    <location>
        <begin position="638"/>
        <end position="649"/>
    </location>
</feature>
<feature type="compositionally biased region" description="Polar residues" evidence="2">
    <location>
        <begin position="676"/>
        <end position="689"/>
    </location>
</feature>
<feature type="compositionally biased region" description="Low complexity" evidence="2">
    <location>
        <begin position="729"/>
        <end position="739"/>
    </location>
</feature>
<feature type="compositionally biased region" description="Pro residues" evidence="2">
    <location>
        <begin position="812"/>
        <end position="822"/>
    </location>
</feature>
<feature type="compositionally biased region" description="Polar residues" evidence="2">
    <location>
        <begin position="929"/>
        <end position="938"/>
    </location>
</feature>
<feature type="compositionally biased region" description="Low complexity" evidence="2">
    <location>
        <begin position="1011"/>
        <end position="1022"/>
    </location>
</feature>
<feature type="compositionally biased region" description="Gly residues" evidence="2">
    <location>
        <begin position="1036"/>
        <end position="1045"/>
    </location>
</feature>
<feature type="compositionally biased region" description="Low complexity" evidence="2">
    <location>
        <begin position="1069"/>
        <end position="1085"/>
    </location>
</feature>
<feature type="compositionally biased region" description="Polar residues" evidence="2">
    <location>
        <begin position="1116"/>
        <end position="1133"/>
    </location>
</feature>
<feature type="compositionally biased region" description="Pro residues" evidence="2">
    <location>
        <begin position="1204"/>
        <end position="1217"/>
    </location>
</feature>
<feature type="compositionally biased region" description="Basic and acidic residues" evidence="2">
    <location>
        <begin position="1247"/>
        <end position="1258"/>
    </location>
</feature>
<feature type="compositionally biased region" description="Polar residues" evidence="2">
    <location>
        <begin position="1261"/>
        <end position="1272"/>
    </location>
</feature>
<feature type="compositionally biased region" description="Polar residues" evidence="2">
    <location>
        <begin position="1352"/>
        <end position="1375"/>
    </location>
</feature>
<feature type="compositionally biased region" description="Polar residues" evidence="2">
    <location>
        <begin position="1561"/>
        <end position="1587"/>
    </location>
</feature>
<feature type="modified residue" description="Phosphoserine" evidence="5">
    <location>
        <position position="656"/>
    </location>
</feature>
<feature type="modified residue" description="Phosphoserine" evidence="5">
    <location>
        <position position="658"/>
    </location>
</feature>
<feature type="modified residue" description="Phosphoserine" evidence="5">
    <location>
        <position position="1139"/>
    </location>
</feature>
<feature type="modified residue" description="Phosphothreonine" evidence="5">
    <location>
        <position position="1222"/>
    </location>
</feature>
<feature type="modified residue" description="Phosphothreonine" evidence="5">
    <location>
        <position position="1236"/>
    </location>
</feature>
<feature type="modified residue" description="Phosphothreonine" evidence="5">
    <location>
        <position position="1251"/>
    </location>
</feature>
<feature type="modified residue" description="Phosphoserine" evidence="5">
    <location>
        <position position="1253"/>
    </location>
</feature>
<feature type="modified residue" description="Phosphoserine" evidence="5">
    <location>
        <position position="1266"/>
    </location>
</feature>
<feature type="modified residue" description="Phosphoserine" evidence="5">
    <location>
        <position position="1274"/>
    </location>
</feature>
<feature type="sequence conflict" description="In Ref. 1." evidence="7" ref="1">
    <original>T</original>
    <variation>TPEAT</variation>
    <location>
        <position position="23"/>
    </location>
</feature>
<feature type="sequence conflict" description="In Ref. 1; CAA41965." evidence="7" ref="1">
    <original>AAA</original>
    <variation>T</variation>
    <location>
        <begin position="94"/>
        <end position="96"/>
    </location>
</feature>
<feature type="sequence conflict" description="In Ref. 1; CAA41965." evidence="7" ref="1">
    <original>T</original>
    <variation>A</variation>
    <location>
        <position position="130"/>
    </location>
</feature>
<feature type="sequence conflict" description="In Ref. 1; CAA41965." evidence="7" ref="1">
    <original>N</original>
    <variation>T</variation>
    <location>
        <position position="136"/>
    </location>
</feature>
<feature type="sequence conflict" description="In Ref. 1; CAA41965." evidence="7" ref="1">
    <original>P</original>
    <variation>S</variation>
    <location>
        <position position="200"/>
    </location>
</feature>
<feature type="sequence conflict" description="In Ref. 1; CAA41965." evidence="7" ref="1">
    <original>I</original>
    <variation>T</variation>
    <location>
        <position position="451"/>
    </location>
</feature>
<feature type="sequence conflict" description="In Ref. 1; CAA41965." evidence="7" ref="1">
    <original>P</original>
    <variation>A</variation>
    <location>
        <position position="513"/>
    </location>
</feature>
<feature type="sequence conflict" description="In Ref. 1; CAA41965." evidence="7" ref="1">
    <original>EQ</original>
    <variation>GE</variation>
    <location>
        <begin position="526"/>
        <end position="527"/>
    </location>
</feature>
<feature type="sequence conflict" description="In Ref. 1; CAA41965." evidence="7" ref="1">
    <original>M</original>
    <variation>L</variation>
    <location>
        <position position="570"/>
    </location>
</feature>
<feature type="sequence conflict" description="In Ref. 1; CAA41965." evidence="7" ref="1">
    <original>A</original>
    <variation>S</variation>
    <location>
        <position position="906"/>
    </location>
</feature>
<feature type="sequence conflict" description="In Ref. 1; CAA41965." evidence="7" ref="1">
    <original>S</original>
    <variation>T</variation>
    <location>
        <position position="919"/>
    </location>
</feature>
<feature type="sequence conflict" description="In Ref. 1; CAA41965." evidence="7" ref="1">
    <original>S</original>
    <variation>N</variation>
    <location>
        <position position="969"/>
    </location>
</feature>
<feature type="sequence conflict" description="In Ref. 1; CAA41965." evidence="7" ref="1">
    <original>P</original>
    <variation>A</variation>
    <location>
        <position position="1279"/>
    </location>
</feature>
<feature type="sequence conflict" description="In Ref. 1; CAA41965." evidence="7" ref="1">
    <original>A</original>
    <variation>T</variation>
    <location>
        <position position="1289"/>
    </location>
</feature>
<feature type="sequence conflict" description="In Ref. 1; CAA41965." evidence="7" ref="1">
    <original>SQP</original>
    <variation>PQS</variation>
    <location>
        <begin position="1364"/>
        <end position="1366"/>
    </location>
</feature>